<name>LEUC_MYCMD</name>
<proteinExistence type="inferred from homology"/>
<accession>P49601</accession>
<accession>A0A0D1CFW1</accession>
<accession>Q4P1K3</accession>
<dbReference type="EC" id="4.2.1.33"/>
<dbReference type="EMBL" id="L20832">
    <property type="protein sequence ID" value="AAA34226.1"/>
    <property type="molecule type" value="Genomic_DNA"/>
</dbReference>
<dbReference type="EMBL" id="CM003160">
    <property type="protein sequence ID" value="KIS65923.1"/>
    <property type="molecule type" value="Genomic_DNA"/>
</dbReference>
<dbReference type="RefSeq" id="XP_011392387.1">
    <property type="nucleotide sequence ID" value="XM_011394085.1"/>
</dbReference>
<dbReference type="SMR" id="P49601"/>
<dbReference type="FunCoup" id="P49601">
    <property type="interactions" value="118"/>
</dbReference>
<dbReference type="STRING" id="237631.P49601"/>
<dbReference type="EnsemblFungi" id="KIS65923">
    <property type="protein sequence ID" value="KIS65923"/>
    <property type="gene ID" value="UMAG_06010"/>
</dbReference>
<dbReference type="GeneID" id="23565739"/>
<dbReference type="KEGG" id="uma:UMAG_06010"/>
<dbReference type="VEuPathDB" id="FungiDB:UMAG_06010"/>
<dbReference type="eggNOG" id="KOG0454">
    <property type="taxonomic scope" value="Eukaryota"/>
</dbReference>
<dbReference type="HOGENOM" id="CLU_006714_1_2_1"/>
<dbReference type="InParanoid" id="P49601"/>
<dbReference type="OMA" id="EDNEPHT"/>
<dbReference type="OrthoDB" id="2279155at2759"/>
<dbReference type="BioCyc" id="MetaCyc:MONOMER-17191"/>
<dbReference type="UniPathway" id="UPA00048">
    <property type="reaction ID" value="UER00071"/>
</dbReference>
<dbReference type="Proteomes" id="UP000000561">
    <property type="component" value="Chromosome 21"/>
</dbReference>
<dbReference type="GO" id="GO:0009316">
    <property type="term" value="C:3-isopropylmalate dehydratase complex"/>
    <property type="evidence" value="ECO:0007669"/>
    <property type="project" value="InterPro"/>
</dbReference>
<dbReference type="GO" id="GO:0003861">
    <property type="term" value="F:3-isopropylmalate dehydratase activity"/>
    <property type="evidence" value="ECO:0007669"/>
    <property type="project" value="UniProtKB-EC"/>
</dbReference>
<dbReference type="GO" id="GO:0051539">
    <property type="term" value="F:4 iron, 4 sulfur cluster binding"/>
    <property type="evidence" value="ECO:0007669"/>
    <property type="project" value="UniProtKB-KW"/>
</dbReference>
<dbReference type="GO" id="GO:0046872">
    <property type="term" value="F:metal ion binding"/>
    <property type="evidence" value="ECO:0007669"/>
    <property type="project" value="UniProtKB-KW"/>
</dbReference>
<dbReference type="GO" id="GO:0009098">
    <property type="term" value="P:L-leucine biosynthetic process"/>
    <property type="evidence" value="ECO:0007669"/>
    <property type="project" value="UniProtKB-UniPathway"/>
</dbReference>
<dbReference type="CDD" id="cd01583">
    <property type="entry name" value="IPMI"/>
    <property type="match status" value="1"/>
</dbReference>
<dbReference type="CDD" id="cd01577">
    <property type="entry name" value="IPMI_Swivel"/>
    <property type="match status" value="1"/>
</dbReference>
<dbReference type="FunFam" id="3.30.499.10:FF:000006">
    <property type="entry name" value="3-isopropylmalate dehydratase large subunit"/>
    <property type="match status" value="1"/>
</dbReference>
<dbReference type="FunFam" id="3.30.499.10:FF:000007">
    <property type="entry name" value="3-isopropylmalate dehydratase large subunit"/>
    <property type="match status" value="1"/>
</dbReference>
<dbReference type="FunFam" id="3.20.19.10:FF:000003">
    <property type="entry name" value="3-isopropylmalate dehydratase small subunit"/>
    <property type="match status" value="1"/>
</dbReference>
<dbReference type="Gene3D" id="3.30.499.10">
    <property type="entry name" value="Aconitase, domain 3"/>
    <property type="match status" value="2"/>
</dbReference>
<dbReference type="Gene3D" id="3.20.19.10">
    <property type="entry name" value="Aconitase, domain 4"/>
    <property type="match status" value="1"/>
</dbReference>
<dbReference type="HAMAP" id="MF_01026">
    <property type="entry name" value="LeuC_type1"/>
    <property type="match status" value="1"/>
</dbReference>
<dbReference type="HAMAP" id="MF_01031">
    <property type="entry name" value="LeuD_type1"/>
    <property type="match status" value="1"/>
</dbReference>
<dbReference type="InterPro" id="IPR004430">
    <property type="entry name" value="3-IsopropMal_deHydase_lsu"/>
</dbReference>
<dbReference type="InterPro" id="IPR004431">
    <property type="entry name" value="3-IsopropMal_deHydase_ssu"/>
</dbReference>
<dbReference type="InterPro" id="IPR012235">
    <property type="entry name" value="3-IsopropMal_deHydtase_ssu/lsu"/>
</dbReference>
<dbReference type="InterPro" id="IPR015931">
    <property type="entry name" value="Acnase/IPM_dHydase_lsu_aba_1/3"/>
</dbReference>
<dbReference type="InterPro" id="IPR001030">
    <property type="entry name" value="Acoase/IPM_deHydtase_lsu_aba"/>
</dbReference>
<dbReference type="InterPro" id="IPR015928">
    <property type="entry name" value="Aconitase/3IPM_dehydase_swvl"/>
</dbReference>
<dbReference type="InterPro" id="IPR018136">
    <property type="entry name" value="Aconitase_4Fe-4S_BS"/>
</dbReference>
<dbReference type="InterPro" id="IPR036008">
    <property type="entry name" value="Aconitase_4Fe-4S_dom"/>
</dbReference>
<dbReference type="InterPro" id="IPR000573">
    <property type="entry name" value="AconitaseA/IPMdHydase_ssu_swvl"/>
</dbReference>
<dbReference type="InterPro" id="IPR050067">
    <property type="entry name" value="IPM_dehydratase_rel_enz"/>
</dbReference>
<dbReference type="InterPro" id="IPR033941">
    <property type="entry name" value="IPMI_cat"/>
</dbReference>
<dbReference type="InterPro" id="IPR033940">
    <property type="entry name" value="IPMI_Swivel"/>
</dbReference>
<dbReference type="NCBIfam" id="TIGR00170">
    <property type="entry name" value="leuC"/>
    <property type="match status" value="1"/>
</dbReference>
<dbReference type="NCBIfam" id="TIGR00171">
    <property type="entry name" value="leuD"/>
    <property type="match status" value="1"/>
</dbReference>
<dbReference type="NCBIfam" id="NF002458">
    <property type="entry name" value="PRK01641.1"/>
    <property type="match status" value="1"/>
</dbReference>
<dbReference type="NCBIfam" id="NF004016">
    <property type="entry name" value="PRK05478.1"/>
    <property type="match status" value="1"/>
</dbReference>
<dbReference type="NCBIfam" id="NF009116">
    <property type="entry name" value="PRK12466.1"/>
    <property type="match status" value="1"/>
</dbReference>
<dbReference type="PANTHER" id="PTHR43822:SF9">
    <property type="entry name" value="3-ISOPROPYLMALATE DEHYDRATASE"/>
    <property type="match status" value="1"/>
</dbReference>
<dbReference type="PANTHER" id="PTHR43822">
    <property type="entry name" value="HOMOACONITASE, MITOCHONDRIAL-RELATED"/>
    <property type="match status" value="1"/>
</dbReference>
<dbReference type="Pfam" id="PF00330">
    <property type="entry name" value="Aconitase"/>
    <property type="match status" value="1"/>
</dbReference>
<dbReference type="Pfam" id="PF00694">
    <property type="entry name" value="Aconitase_C"/>
    <property type="match status" value="1"/>
</dbReference>
<dbReference type="PIRSF" id="PIRSF001418">
    <property type="entry name" value="ACN"/>
    <property type="match status" value="1"/>
</dbReference>
<dbReference type="PRINTS" id="PR00415">
    <property type="entry name" value="ACONITASE"/>
</dbReference>
<dbReference type="SUPFAM" id="SSF53732">
    <property type="entry name" value="Aconitase iron-sulfur domain"/>
    <property type="match status" value="1"/>
</dbReference>
<dbReference type="SUPFAM" id="SSF52016">
    <property type="entry name" value="LeuD/IlvD-like"/>
    <property type="match status" value="1"/>
</dbReference>
<dbReference type="PROSITE" id="PS00450">
    <property type="entry name" value="ACONITASE_1"/>
    <property type="match status" value="1"/>
</dbReference>
<dbReference type="PROSITE" id="PS01244">
    <property type="entry name" value="ACONITASE_2"/>
    <property type="match status" value="1"/>
</dbReference>
<gene>
    <name type="primary">LEU1</name>
    <name type="ORF">UMAG_06010</name>
</gene>
<keyword id="KW-0004">4Fe-4S</keyword>
<keyword id="KW-0028">Amino-acid biosynthesis</keyword>
<keyword id="KW-0100">Branched-chain amino acid biosynthesis</keyword>
<keyword id="KW-0408">Iron</keyword>
<keyword id="KW-0411">Iron-sulfur</keyword>
<keyword id="KW-0432">Leucine biosynthesis</keyword>
<keyword id="KW-0456">Lyase</keyword>
<keyword id="KW-0479">Metal-binding</keyword>
<keyword id="KW-1185">Reference proteome</keyword>
<evidence type="ECO:0000250" key="1"/>
<evidence type="ECO:0000305" key="2"/>
<feature type="chain" id="PRO_0000076893" description="3-isopropylmalate dehydratase">
    <location>
        <begin position="1"/>
        <end position="773"/>
    </location>
</feature>
<feature type="binding site" evidence="1">
    <location>
        <position position="355"/>
    </location>
    <ligand>
        <name>[4Fe-4S] cluster</name>
        <dbReference type="ChEBI" id="CHEBI:49883"/>
    </ligand>
</feature>
<feature type="binding site" evidence="1">
    <location>
        <position position="415"/>
    </location>
    <ligand>
        <name>[4Fe-4S] cluster</name>
        <dbReference type="ChEBI" id="CHEBI:49883"/>
    </ligand>
</feature>
<feature type="binding site" evidence="1">
    <location>
        <position position="418"/>
    </location>
    <ligand>
        <name>[4Fe-4S] cluster</name>
        <dbReference type="ChEBI" id="CHEBI:49883"/>
    </ligand>
</feature>
<reference key="1">
    <citation type="journal article" date="1994" name="Gene">
        <title>The LEU1 gene of Ustilago maydis.</title>
        <authorList>
            <person name="Rubin B.P."/>
            <person name="Li D."/>
            <person name="Holloman W.K."/>
        </authorList>
    </citation>
    <scope>NUCLEOTIDE SEQUENCE [GENOMIC DNA]</scope>
</reference>
<reference key="2">
    <citation type="journal article" date="2006" name="Nature">
        <title>Insights from the genome of the biotrophic fungal plant pathogen Ustilago maydis.</title>
        <authorList>
            <person name="Kaemper J."/>
            <person name="Kahmann R."/>
            <person name="Boelker M."/>
            <person name="Ma L.-J."/>
            <person name="Brefort T."/>
            <person name="Saville B.J."/>
            <person name="Banuett F."/>
            <person name="Kronstad J.W."/>
            <person name="Gold S.E."/>
            <person name="Mueller O."/>
            <person name="Perlin M.H."/>
            <person name="Woesten H.A.B."/>
            <person name="de Vries R."/>
            <person name="Ruiz-Herrera J."/>
            <person name="Reynaga-Pena C.G."/>
            <person name="Snetselaar K."/>
            <person name="McCann M."/>
            <person name="Perez-Martin J."/>
            <person name="Feldbruegge M."/>
            <person name="Basse C.W."/>
            <person name="Steinberg G."/>
            <person name="Ibeas J.I."/>
            <person name="Holloman W."/>
            <person name="Guzman P."/>
            <person name="Farman M.L."/>
            <person name="Stajich J.E."/>
            <person name="Sentandreu R."/>
            <person name="Gonzalez-Prieto J.M."/>
            <person name="Kennell J.C."/>
            <person name="Molina L."/>
            <person name="Schirawski J."/>
            <person name="Mendoza-Mendoza A."/>
            <person name="Greilinger D."/>
            <person name="Muench K."/>
            <person name="Roessel N."/>
            <person name="Scherer M."/>
            <person name="Vranes M."/>
            <person name="Ladendorf O."/>
            <person name="Vincon V."/>
            <person name="Fuchs U."/>
            <person name="Sandrock B."/>
            <person name="Meng S."/>
            <person name="Ho E.C.H."/>
            <person name="Cahill M.J."/>
            <person name="Boyce K.J."/>
            <person name="Klose J."/>
            <person name="Klosterman S.J."/>
            <person name="Deelstra H.J."/>
            <person name="Ortiz-Castellanos L."/>
            <person name="Li W."/>
            <person name="Sanchez-Alonso P."/>
            <person name="Schreier P.H."/>
            <person name="Haeuser-Hahn I."/>
            <person name="Vaupel M."/>
            <person name="Koopmann E."/>
            <person name="Friedrich G."/>
            <person name="Voss H."/>
            <person name="Schlueter T."/>
            <person name="Margolis J."/>
            <person name="Platt D."/>
            <person name="Swimmer C."/>
            <person name="Gnirke A."/>
            <person name="Chen F."/>
            <person name="Vysotskaia V."/>
            <person name="Mannhaupt G."/>
            <person name="Gueldener U."/>
            <person name="Muensterkoetter M."/>
            <person name="Haase D."/>
            <person name="Oesterheld M."/>
            <person name="Mewes H.-W."/>
            <person name="Mauceli E.W."/>
            <person name="DeCaprio D."/>
            <person name="Wade C.M."/>
            <person name="Butler J."/>
            <person name="Young S.K."/>
            <person name="Jaffe D.B."/>
            <person name="Calvo S.E."/>
            <person name="Nusbaum C."/>
            <person name="Galagan J.E."/>
            <person name="Birren B.W."/>
        </authorList>
    </citation>
    <scope>NUCLEOTIDE SEQUENCE [LARGE SCALE GENOMIC DNA]</scope>
    <source>
        <strain>DSM 14603 / FGSC 9021 / UM521</strain>
    </source>
</reference>
<reference key="3">
    <citation type="submission" date="2014-09" db="EMBL/GenBank/DDBJ databases">
        <authorList>
            <person name="Gueldener U."/>
            <person name="Muensterkoetter M."/>
            <person name="Walter M.C."/>
            <person name="Mannhaupt G."/>
            <person name="Kahmann R."/>
        </authorList>
    </citation>
    <scope>GENOME REANNOTATION</scope>
    <source>
        <strain>DSM 14603 / FGSC 9021 / UM521</strain>
    </source>
</reference>
<organism>
    <name type="scientific">Mycosarcoma maydis</name>
    <name type="common">Corn smut fungus</name>
    <name type="synonym">Ustilago maydis</name>
    <dbReference type="NCBI Taxonomy" id="5270"/>
    <lineage>
        <taxon>Eukaryota</taxon>
        <taxon>Fungi</taxon>
        <taxon>Dikarya</taxon>
        <taxon>Basidiomycota</taxon>
        <taxon>Ustilaginomycotina</taxon>
        <taxon>Ustilaginomycetes</taxon>
        <taxon>Ustilaginales</taxon>
        <taxon>Ustilaginaceae</taxon>
        <taxon>Mycosarcoma</taxon>
    </lineage>
</organism>
<sequence>MAPKTLYEKIFDSHLVHEEADGTCLIYIDRHLVHEVTSPQAFEGLRNANRKVRRTDCTLATVDHNIPTASRKSYRDTKSFVEQVDSRTQCMTLEENVKAFGLTFFGLSDNRQGIVHIIGPEQGFTLPGATIVCGDSHTSTHGAFGALAFGIGTSEVEHVLATQTLLQKRAKNMLIQVDGELSQGVTSKDIILHIIGLIGTAGGTGHVIEYAGSTIRSLSMEARMSICNMSIEAGARAGLIAPDEITYEYIKGRPLAPKQGEAWDQALAYWKTLPSDEGAQYDTVIKIDAKDIPPTVTWGTSPQDVVAITGTVPDPKNASNEAEAKAWTRALEYMGLEAGTPMEKIKIDKVFIGSCTNARIEDLRAAARVLHGRKVADGLYCMLVPGSGLVKKQAEAEGLDKIFQAAGFDWREAGCSMCLGMNPDQLAPGERCASTSNRNFEGRQGAGGRTHLMSPAMAAACAVTGYLTDVRKVVGHSSAKVGSDAAKPAFEIEVSDAKSYLVDATPAPAPTNVAAAGAGALTDEDALRDVPASHISSSGGGMEKFTTLTGIAAPLERSNVDTDLIIPKQFLKTIKRTGLGSALFWPLRYDAKTGEPDPAFVLNQKPYDQSKILVVTGPNFGCGSSREHAAWSLLDFGIRAVIAESFGDIFRNNLTKNGQLPVVLSRAQIQRLTQDAKAGKQITVDLVDQLVITADGKEKFSFETPEFTRHCLINGLDDIALTLQRDAQIGAFERNRSTHTPWLDGFGYHANSNSSSLLDSAKPLVNNVTATDW</sequence>
<protein>
    <recommendedName>
        <fullName>3-isopropylmalate dehydratase</fullName>
        <ecNumber>4.2.1.33</ecNumber>
    </recommendedName>
    <alternativeName>
        <fullName>Alpha-IPM isomerase</fullName>
        <shortName>IPMI</shortName>
    </alternativeName>
    <alternativeName>
        <fullName>Isopropylmalate isomerase</fullName>
    </alternativeName>
</protein>
<comment type="function">
    <text>Catalyzes the isomerization between 2-isopropylmalate and 3-isopropylmalate, via the formation of 2-isopropylmaleate.</text>
</comment>
<comment type="catalytic activity">
    <reaction>
        <text>(2R,3S)-3-isopropylmalate = (2S)-2-isopropylmalate</text>
        <dbReference type="Rhea" id="RHEA:32287"/>
        <dbReference type="ChEBI" id="CHEBI:1178"/>
        <dbReference type="ChEBI" id="CHEBI:35121"/>
        <dbReference type="EC" id="4.2.1.33"/>
    </reaction>
</comment>
<comment type="cofactor">
    <cofactor evidence="1">
        <name>[4Fe-4S] cluster</name>
        <dbReference type="ChEBI" id="CHEBI:49883"/>
    </cofactor>
    <text evidence="1">Binds 1 [4Fe-4S] cluster per subunit.</text>
</comment>
<comment type="pathway">
    <text>Amino-acid biosynthesis; L-leucine biosynthesis; L-leucine from 3-methyl-2-oxobutanoate: step 2/4.</text>
</comment>
<comment type="subunit">
    <text evidence="1">Monomer.</text>
</comment>
<comment type="similarity">
    <text evidence="2">Belongs to the aconitase/IPM isomerase family.</text>
</comment>